<keyword id="KW-0067">ATP-binding</keyword>
<keyword id="KW-0143">Chaperone</keyword>
<keyword id="KW-0547">Nucleotide-binding</keyword>
<keyword id="KW-0597">Phosphoprotein</keyword>
<keyword id="KW-0346">Stress response</keyword>
<name>DNAK_STRT1</name>
<protein>
    <recommendedName>
        <fullName evidence="1">Chaperone protein DnaK</fullName>
    </recommendedName>
    <alternativeName>
        <fullName evidence="1">HSP70</fullName>
    </alternativeName>
    <alternativeName>
        <fullName evidence="1">Heat shock 70 kDa protein</fullName>
    </alternativeName>
    <alternativeName>
        <fullName evidence="1">Heat shock protein 70</fullName>
    </alternativeName>
</protein>
<evidence type="ECO:0000255" key="1">
    <source>
        <dbReference type="HAMAP-Rule" id="MF_00332"/>
    </source>
</evidence>
<evidence type="ECO:0000256" key="2">
    <source>
        <dbReference type="SAM" id="MobiDB-lite"/>
    </source>
</evidence>
<organism>
    <name type="scientific">Streptococcus thermophilus (strain CNRZ 1066)</name>
    <dbReference type="NCBI Taxonomy" id="299768"/>
    <lineage>
        <taxon>Bacteria</taxon>
        <taxon>Bacillati</taxon>
        <taxon>Bacillota</taxon>
        <taxon>Bacilli</taxon>
        <taxon>Lactobacillales</taxon>
        <taxon>Streptococcaceae</taxon>
        <taxon>Streptococcus</taxon>
    </lineage>
</organism>
<feature type="chain" id="PRO_0000226017" description="Chaperone protein DnaK">
    <location>
        <begin position="1"/>
        <end position="607"/>
    </location>
</feature>
<feature type="region of interest" description="Disordered" evidence="2">
    <location>
        <begin position="579"/>
        <end position="607"/>
    </location>
</feature>
<feature type="compositionally biased region" description="Low complexity" evidence="2">
    <location>
        <begin position="579"/>
        <end position="591"/>
    </location>
</feature>
<feature type="compositionally biased region" description="Acidic residues" evidence="2">
    <location>
        <begin position="595"/>
        <end position="607"/>
    </location>
</feature>
<feature type="modified residue" description="Phosphothreonine; by autocatalysis" evidence="1">
    <location>
        <position position="173"/>
    </location>
</feature>
<gene>
    <name evidence="1" type="primary">dnaK</name>
    <name type="ordered locus">str0120</name>
</gene>
<reference key="1">
    <citation type="journal article" date="2004" name="Nat. Biotechnol.">
        <title>Complete sequence and comparative genome analysis of the dairy bacterium Streptococcus thermophilus.</title>
        <authorList>
            <person name="Bolotin A."/>
            <person name="Quinquis B."/>
            <person name="Renault P."/>
            <person name="Sorokin A."/>
            <person name="Ehrlich S.D."/>
            <person name="Kulakauskas S."/>
            <person name="Lapidus A."/>
            <person name="Goltsman E."/>
            <person name="Mazur M."/>
            <person name="Pusch G.D."/>
            <person name="Fonstein M."/>
            <person name="Overbeek R."/>
            <person name="Kyprides N."/>
            <person name="Purnelle B."/>
            <person name="Prozzi D."/>
            <person name="Ngui K."/>
            <person name="Masuy D."/>
            <person name="Hancy F."/>
            <person name="Burteau S."/>
            <person name="Boutry M."/>
            <person name="Delcour J."/>
            <person name="Goffeau A."/>
            <person name="Hols P."/>
        </authorList>
    </citation>
    <scope>NUCLEOTIDE SEQUENCE [LARGE SCALE GENOMIC DNA]</scope>
    <source>
        <strain>CNRZ 1066</strain>
    </source>
</reference>
<proteinExistence type="inferred from homology"/>
<sequence>MSKIIGIDLGTTNSAVAVLEGTEPKIIANPEGNRTTPSVVSFKNGEIIVGDAAKRQAVTNPDTVISIKSKMGTSEKVSANGKEYTPQEISAMILQYLKGYAEEYLGEKVTKAVITVPAYFNDAQRQATKDAGKIAGLEVERIVNEPTAAALAYGLDKTDKEEKILVFDLGGGTFDVSILELGDGVFDVLATAGDNKLGGDDFDQKIIDYMVEEFKKENGIDLSTDKMALQRLKDAAEKAKKDLSGVTSTQISLPFITAGEAGPLHLEMTLTRAKFDDLTRDLVERTKTPVRQALSDAGLSLSDIDEVILVGGSTRIPAVVEAVKAETGKEPNKSVNPDEVVAMGAAIQGGVISGDVKDVVLLDVTPLSLGIETMGGVFTKLIERNTTIPTSKSQVFSTAADNQPAVDIHVLQGERPMAADNKTLGRFQLTDIPAAPRGVPQIEVTFDIDKNGIVSVKAKDLGTQKEQTIVIQSNSGLTDEEIERMMKDAEANAEADAKRKAEVELRNEVDQAIFATEKTIKETEGKGFDTERDAAQSALDELKKAQESGNLDDMKAKLEALNEKAQALAVKLYEQAAAAQQAQAGAEGAQATDNSGDDVVDGEFTEK</sequence>
<accession>Q5M1T8</accession>
<comment type="function">
    <text evidence="1">Acts as a chaperone.</text>
</comment>
<comment type="induction">
    <text evidence="1">By stress conditions e.g. heat shock.</text>
</comment>
<comment type="similarity">
    <text evidence="1">Belongs to the heat shock protein 70 family.</text>
</comment>
<dbReference type="EMBL" id="CP000024">
    <property type="protein sequence ID" value="AAV61735.1"/>
    <property type="molecule type" value="Genomic_DNA"/>
</dbReference>
<dbReference type="RefSeq" id="WP_011226783.1">
    <property type="nucleotide sequence ID" value="NC_006449.1"/>
</dbReference>
<dbReference type="SMR" id="Q5M1T8"/>
<dbReference type="GeneID" id="66898045"/>
<dbReference type="KEGG" id="stc:str0120"/>
<dbReference type="HOGENOM" id="CLU_005965_2_1_9"/>
<dbReference type="GO" id="GO:0005524">
    <property type="term" value="F:ATP binding"/>
    <property type="evidence" value="ECO:0007669"/>
    <property type="project" value="UniProtKB-UniRule"/>
</dbReference>
<dbReference type="GO" id="GO:0140662">
    <property type="term" value="F:ATP-dependent protein folding chaperone"/>
    <property type="evidence" value="ECO:0007669"/>
    <property type="project" value="InterPro"/>
</dbReference>
<dbReference type="GO" id="GO:0051082">
    <property type="term" value="F:unfolded protein binding"/>
    <property type="evidence" value="ECO:0007669"/>
    <property type="project" value="InterPro"/>
</dbReference>
<dbReference type="CDD" id="cd10234">
    <property type="entry name" value="ASKHA_NBD_HSP70_DnaK-like"/>
    <property type="match status" value="1"/>
</dbReference>
<dbReference type="FunFam" id="2.60.34.10:FF:000014">
    <property type="entry name" value="Chaperone protein DnaK HSP70"/>
    <property type="match status" value="1"/>
</dbReference>
<dbReference type="FunFam" id="3.30.420.40:FF:000071">
    <property type="entry name" value="Molecular chaperone DnaK"/>
    <property type="match status" value="1"/>
</dbReference>
<dbReference type="FunFam" id="3.90.640.10:FF:000003">
    <property type="entry name" value="Molecular chaperone DnaK"/>
    <property type="match status" value="1"/>
</dbReference>
<dbReference type="Gene3D" id="1.20.1270.10">
    <property type="match status" value="1"/>
</dbReference>
<dbReference type="Gene3D" id="3.30.420.40">
    <property type="match status" value="2"/>
</dbReference>
<dbReference type="Gene3D" id="3.90.640.10">
    <property type="entry name" value="Actin, Chain A, domain 4"/>
    <property type="match status" value="1"/>
</dbReference>
<dbReference type="Gene3D" id="2.60.34.10">
    <property type="entry name" value="Substrate Binding Domain Of DNAk, Chain A, domain 1"/>
    <property type="match status" value="1"/>
</dbReference>
<dbReference type="HAMAP" id="MF_00332">
    <property type="entry name" value="DnaK"/>
    <property type="match status" value="1"/>
</dbReference>
<dbReference type="InterPro" id="IPR043129">
    <property type="entry name" value="ATPase_NBD"/>
</dbReference>
<dbReference type="InterPro" id="IPR012725">
    <property type="entry name" value="Chaperone_DnaK"/>
</dbReference>
<dbReference type="InterPro" id="IPR018181">
    <property type="entry name" value="Heat_shock_70_CS"/>
</dbReference>
<dbReference type="InterPro" id="IPR029048">
    <property type="entry name" value="HSP70_C_sf"/>
</dbReference>
<dbReference type="InterPro" id="IPR029047">
    <property type="entry name" value="HSP70_peptide-bd_sf"/>
</dbReference>
<dbReference type="InterPro" id="IPR013126">
    <property type="entry name" value="Hsp_70_fam"/>
</dbReference>
<dbReference type="NCBIfam" id="NF001413">
    <property type="entry name" value="PRK00290.1"/>
    <property type="match status" value="1"/>
</dbReference>
<dbReference type="NCBIfam" id="TIGR02350">
    <property type="entry name" value="prok_dnaK"/>
    <property type="match status" value="1"/>
</dbReference>
<dbReference type="PANTHER" id="PTHR19375">
    <property type="entry name" value="HEAT SHOCK PROTEIN 70KDA"/>
    <property type="match status" value="1"/>
</dbReference>
<dbReference type="Pfam" id="PF00012">
    <property type="entry name" value="HSP70"/>
    <property type="match status" value="1"/>
</dbReference>
<dbReference type="PRINTS" id="PR00301">
    <property type="entry name" value="HEATSHOCK70"/>
</dbReference>
<dbReference type="SUPFAM" id="SSF53067">
    <property type="entry name" value="Actin-like ATPase domain"/>
    <property type="match status" value="2"/>
</dbReference>
<dbReference type="SUPFAM" id="SSF100934">
    <property type="entry name" value="Heat shock protein 70kD (HSP70), C-terminal subdomain"/>
    <property type="match status" value="1"/>
</dbReference>
<dbReference type="SUPFAM" id="SSF100920">
    <property type="entry name" value="Heat shock protein 70kD (HSP70), peptide-binding domain"/>
    <property type="match status" value="1"/>
</dbReference>
<dbReference type="PROSITE" id="PS00297">
    <property type="entry name" value="HSP70_1"/>
    <property type="match status" value="1"/>
</dbReference>
<dbReference type="PROSITE" id="PS00329">
    <property type="entry name" value="HSP70_2"/>
    <property type="match status" value="1"/>
</dbReference>
<dbReference type="PROSITE" id="PS01036">
    <property type="entry name" value="HSP70_3"/>
    <property type="match status" value="1"/>
</dbReference>